<reference key="1">
    <citation type="submission" date="2006-09" db="EMBL/GenBank/DDBJ databases">
        <authorList>
            <consortium name="The Klebsiella pneumonia Genome Sequencing Project"/>
            <person name="McClelland M."/>
            <person name="Sanderson E.K."/>
            <person name="Spieth J."/>
            <person name="Clifton W.S."/>
            <person name="Latreille P."/>
            <person name="Sabo A."/>
            <person name="Pepin K."/>
            <person name="Bhonagiri V."/>
            <person name="Porwollik S."/>
            <person name="Ali J."/>
            <person name="Wilson R.K."/>
        </authorList>
    </citation>
    <scope>NUCLEOTIDE SEQUENCE [LARGE SCALE GENOMIC DNA]</scope>
    <source>
        <strain>ATCC 700721 / MGH 78578</strain>
    </source>
</reference>
<sequence>MTLSPYLQEVAKRRTFAIISHPDAGKTTITEKVLLFGQAIQTAGTVKGRGSSQHAKSDWMEMEKQRGISITTSVMQFPYHDCLVNLLDTPGHEDFSEDTYRTLTAVDCCLMVIDAAKGVEDRTRKLMEVTRLRDTPILTFMNKLDRDIRDPMELLDEVENELKIGCAPITWPIGCGKLFKGVYHLYKDETYLYQTGKGHTIQEVRIVKGLNNPDLDAAVGEDLAQQLRDELELVQGASNEFDKDLFLAGEITPVFFGTALGNFGVDHMLDGLVEWAPAPMPRNTDTREVTATEEKFTGFVFKIQANMDPKHRDRVAFMRVVSGKYEKGMKLRQVRIGKDVVISDALTFMAGDRSHVEEAYPGDIIGLHNHGTIQIGDTFTQGEMMKFTGIPNFAPELFRRIRLKDPLKQKQLLKGLVQLSEEGAVQVFRPIANNDLIVGAVGVLQFDVVVARLKSEYNVEAIYESVNVATARWVESTDVKKFEEFKRKNEVQLALDGGDNLTYIAPTMVNLNLTQERYPDVVFRKTREH</sequence>
<dbReference type="EMBL" id="CP000647">
    <property type="protein sequence ID" value="ABR80174.1"/>
    <property type="molecule type" value="Genomic_DNA"/>
</dbReference>
<dbReference type="RefSeq" id="WP_002887711.1">
    <property type="nucleotide sequence ID" value="NC_009648.1"/>
</dbReference>
<dbReference type="SMR" id="A6THZ0"/>
<dbReference type="STRING" id="272620.KPN_04831"/>
<dbReference type="jPOST" id="A6THZ0"/>
<dbReference type="PaxDb" id="272620-KPN_04831"/>
<dbReference type="EnsemblBacteria" id="ABR80174">
    <property type="protein sequence ID" value="ABR80174"/>
    <property type="gene ID" value="KPN_04831"/>
</dbReference>
<dbReference type="GeneID" id="93252163"/>
<dbReference type="KEGG" id="kpn:KPN_04831"/>
<dbReference type="HOGENOM" id="CLU_002794_2_1_6"/>
<dbReference type="Proteomes" id="UP000000265">
    <property type="component" value="Chromosome"/>
</dbReference>
<dbReference type="GO" id="GO:0005829">
    <property type="term" value="C:cytosol"/>
    <property type="evidence" value="ECO:0007669"/>
    <property type="project" value="TreeGrafter"/>
</dbReference>
<dbReference type="GO" id="GO:0005525">
    <property type="term" value="F:GTP binding"/>
    <property type="evidence" value="ECO:0007669"/>
    <property type="project" value="UniProtKB-UniRule"/>
</dbReference>
<dbReference type="GO" id="GO:0003924">
    <property type="term" value="F:GTPase activity"/>
    <property type="evidence" value="ECO:0007669"/>
    <property type="project" value="InterPro"/>
</dbReference>
<dbReference type="GO" id="GO:0097216">
    <property type="term" value="F:guanosine tetraphosphate binding"/>
    <property type="evidence" value="ECO:0007669"/>
    <property type="project" value="UniProtKB-ARBA"/>
</dbReference>
<dbReference type="GO" id="GO:0016150">
    <property type="term" value="F:translation release factor activity, codon nonspecific"/>
    <property type="evidence" value="ECO:0007669"/>
    <property type="project" value="TreeGrafter"/>
</dbReference>
<dbReference type="GO" id="GO:0016149">
    <property type="term" value="F:translation release factor activity, codon specific"/>
    <property type="evidence" value="ECO:0007669"/>
    <property type="project" value="UniProtKB-UniRule"/>
</dbReference>
<dbReference type="GO" id="GO:0006449">
    <property type="term" value="P:regulation of translational termination"/>
    <property type="evidence" value="ECO:0007669"/>
    <property type="project" value="UniProtKB-UniRule"/>
</dbReference>
<dbReference type="CDD" id="cd04169">
    <property type="entry name" value="RF3"/>
    <property type="match status" value="1"/>
</dbReference>
<dbReference type="CDD" id="cd03689">
    <property type="entry name" value="RF3_II"/>
    <property type="match status" value="1"/>
</dbReference>
<dbReference type="CDD" id="cd16259">
    <property type="entry name" value="RF3_III"/>
    <property type="match status" value="1"/>
</dbReference>
<dbReference type="FunFam" id="2.40.30.10:FF:000040">
    <property type="entry name" value="Peptide chain release factor 3"/>
    <property type="match status" value="1"/>
</dbReference>
<dbReference type="FunFam" id="3.30.70.3280:FF:000001">
    <property type="entry name" value="Peptide chain release factor 3"/>
    <property type="match status" value="1"/>
</dbReference>
<dbReference type="FunFam" id="3.40.50.300:FF:000184">
    <property type="entry name" value="Peptide chain release factor 3"/>
    <property type="match status" value="1"/>
</dbReference>
<dbReference type="FunFam" id="3.40.50.300:FF:000253">
    <property type="entry name" value="Peptide chain release factor 3"/>
    <property type="match status" value="1"/>
</dbReference>
<dbReference type="Gene3D" id="3.40.50.300">
    <property type="entry name" value="P-loop containing nucleotide triphosphate hydrolases"/>
    <property type="match status" value="3"/>
</dbReference>
<dbReference type="Gene3D" id="3.30.70.3280">
    <property type="entry name" value="Peptide chain release factor 3, domain III"/>
    <property type="match status" value="1"/>
</dbReference>
<dbReference type="HAMAP" id="MF_00072">
    <property type="entry name" value="Rel_fac_3"/>
    <property type="match status" value="1"/>
</dbReference>
<dbReference type="InterPro" id="IPR053905">
    <property type="entry name" value="EF-G-like_DII"/>
</dbReference>
<dbReference type="InterPro" id="IPR035647">
    <property type="entry name" value="EFG_III/V"/>
</dbReference>
<dbReference type="InterPro" id="IPR031157">
    <property type="entry name" value="G_TR_CS"/>
</dbReference>
<dbReference type="InterPro" id="IPR027417">
    <property type="entry name" value="P-loop_NTPase"/>
</dbReference>
<dbReference type="InterPro" id="IPR004548">
    <property type="entry name" value="PrfC"/>
</dbReference>
<dbReference type="InterPro" id="IPR032090">
    <property type="entry name" value="RF3_C"/>
</dbReference>
<dbReference type="InterPro" id="IPR038467">
    <property type="entry name" value="RF3_dom_3_sf"/>
</dbReference>
<dbReference type="InterPro" id="IPR041732">
    <property type="entry name" value="RF3_GTP-bd"/>
</dbReference>
<dbReference type="InterPro" id="IPR005225">
    <property type="entry name" value="Small_GTP-bd"/>
</dbReference>
<dbReference type="InterPro" id="IPR000795">
    <property type="entry name" value="T_Tr_GTP-bd_dom"/>
</dbReference>
<dbReference type="InterPro" id="IPR009000">
    <property type="entry name" value="Transl_B-barrel_sf"/>
</dbReference>
<dbReference type="NCBIfam" id="TIGR00503">
    <property type="entry name" value="prfC"/>
    <property type="match status" value="1"/>
</dbReference>
<dbReference type="NCBIfam" id="NF001964">
    <property type="entry name" value="PRK00741.1"/>
    <property type="match status" value="1"/>
</dbReference>
<dbReference type="NCBIfam" id="TIGR00231">
    <property type="entry name" value="small_GTP"/>
    <property type="match status" value="1"/>
</dbReference>
<dbReference type="PANTHER" id="PTHR43556">
    <property type="entry name" value="PEPTIDE CHAIN RELEASE FACTOR RF3"/>
    <property type="match status" value="1"/>
</dbReference>
<dbReference type="PANTHER" id="PTHR43556:SF2">
    <property type="entry name" value="PEPTIDE CHAIN RELEASE FACTOR RF3"/>
    <property type="match status" value="1"/>
</dbReference>
<dbReference type="Pfam" id="PF22042">
    <property type="entry name" value="EF-G_D2"/>
    <property type="match status" value="1"/>
</dbReference>
<dbReference type="Pfam" id="PF00009">
    <property type="entry name" value="GTP_EFTU"/>
    <property type="match status" value="1"/>
</dbReference>
<dbReference type="Pfam" id="PF16658">
    <property type="entry name" value="RF3_C"/>
    <property type="match status" value="1"/>
</dbReference>
<dbReference type="PRINTS" id="PR00315">
    <property type="entry name" value="ELONGATNFCT"/>
</dbReference>
<dbReference type="SUPFAM" id="SSF54980">
    <property type="entry name" value="EF-G C-terminal domain-like"/>
    <property type="match status" value="1"/>
</dbReference>
<dbReference type="SUPFAM" id="SSF52540">
    <property type="entry name" value="P-loop containing nucleoside triphosphate hydrolases"/>
    <property type="match status" value="1"/>
</dbReference>
<dbReference type="SUPFAM" id="SSF50447">
    <property type="entry name" value="Translation proteins"/>
    <property type="match status" value="1"/>
</dbReference>
<dbReference type="PROSITE" id="PS00301">
    <property type="entry name" value="G_TR_1"/>
    <property type="match status" value="1"/>
</dbReference>
<dbReference type="PROSITE" id="PS51722">
    <property type="entry name" value="G_TR_2"/>
    <property type="match status" value="1"/>
</dbReference>
<organism>
    <name type="scientific">Klebsiella pneumoniae subsp. pneumoniae (strain ATCC 700721 / MGH 78578)</name>
    <dbReference type="NCBI Taxonomy" id="272620"/>
    <lineage>
        <taxon>Bacteria</taxon>
        <taxon>Pseudomonadati</taxon>
        <taxon>Pseudomonadota</taxon>
        <taxon>Gammaproteobacteria</taxon>
        <taxon>Enterobacterales</taxon>
        <taxon>Enterobacteriaceae</taxon>
        <taxon>Klebsiella/Raoultella group</taxon>
        <taxon>Klebsiella</taxon>
        <taxon>Klebsiella pneumoniae complex</taxon>
    </lineage>
</organism>
<proteinExistence type="inferred from homology"/>
<protein>
    <recommendedName>
        <fullName evidence="1">Peptide chain release factor 3</fullName>
        <shortName evidence="1">RF-3</shortName>
    </recommendedName>
</protein>
<evidence type="ECO:0000255" key="1">
    <source>
        <dbReference type="HAMAP-Rule" id="MF_00072"/>
    </source>
</evidence>
<accession>A6THZ0</accession>
<gene>
    <name evidence="1" type="primary">prfC</name>
    <name type="ordered locus">KPN78578_47500</name>
    <name type="ORF">KPN_04831</name>
</gene>
<comment type="function">
    <text evidence="1">Increases the formation of ribosomal termination complexes and stimulates activities of RF-1 and RF-2. It binds guanine nucleotides and has strong preference for UGA stop codons. It may interact directly with the ribosome. The stimulation of RF-1 and RF-2 is significantly reduced by GTP and GDP, but not by GMP.</text>
</comment>
<comment type="subcellular location">
    <subcellularLocation>
        <location evidence="1">Cytoplasm</location>
    </subcellularLocation>
</comment>
<comment type="similarity">
    <text evidence="1">Belongs to the TRAFAC class translation factor GTPase superfamily. Classic translation factor GTPase family. PrfC subfamily.</text>
</comment>
<feature type="chain" id="PRO_1000023652" description="Peptide chain release factor 3">
    <location>
        <begin position="1"/>
        <end position="529"/>
    </location>
</feature>
<feature type="domain" description="tr-type G">
    <location>
        <begin position="11"/>
        <end position="280"/>
    </location>
</feature>
<feature type="binding site" evidence="1">
    <location>
        <begin position="20"/>
        <end position="27"/>
    </location>
    <ligand>
        <name>GTP</name>
        <dbReference type="ChEBI" id="CHEBI:37565"/>
    </ligand>
</feature>
<feature type="binding site" evidence="1">
    <location>
        <begin position="88"/>
        <end position="92"/>
    </location>
    <ligand>
        <name>GTP</name>
        <dbReference type="ChEBI" id="CHEBI:37565"/>
    </ligand>
</feature>
<feature type="binding site" evidence="1">
    <location>
        <begin position="142"/>
        <end position="145"/>
    </location>
    <ligand>
        <name>GTP</name>
        <dbReference type="ChEBI" id="CHEBI:37565"/>
    </ligand>
</feature>
<name>RF3_KLEP7</name>
<keyword id="KW-0963">Cytoplasm</keyword>
<keyword id="KW-0342">GTP-binding</keyword>
<keyword id="KW-0547">Nucleotide-binding</keyword>
<keyword id="KW-0648">Protein biosynthesis</keyword>